<keyword id="KW-0067">ATP-binding</keyword>
<keyword id="KW-0963">Cytoplasm</keyword>
<keyword id="KW-0275">Fatty acid biosynthesis</keyword>
<keyword id="KW-0276">Fatty acid metabolism</keyword>
<keyword id="KW-0444">Lipid biosynthesis</keyword>
<keyword id="KW-0443">Lipid metabolism</keyword>
<keyword id="KW-0547">Nucleotide-binding</keyword>
<keyword id="KW-0808">Transferase</keyword>
<feature type="chain" id="PRO_0000389708" description="Acetyl-coenzyme A carboxylase carboxyl transferase subunit beta">
    <location>
        <begin position="1"/>
        <end position="301"/>
    </location>
</feature>
<feature type="domain" description="CoA carboxyltransferase N-terminal" evidence="2">
    <location>
        <begin position="25"/>
        <end position="294"/>
    </location>
</feature>
<protein>
    <recommendedName>
        <fullName evidence="1">Acetyl-coenzyme A carboxylase carboxyl transferase subunit beta</fullName>
        <shortName evidence="1">ACCase subunit beta</shortName>
        <shortName evidence="1">Acetyl-CoA carboxylase carboxyltransferase subunit beta</shortName>
        <ecNumber evidence="1">2.1.3.15</ecNumber>
    </recommendedName>
</protein>
<organism>
    <name type="scientific">Brucella suis (strain ATCC 23445 / NCTC 10510)</name>
    <dbReference type="NCBI Taxonomy" id="470137"/>
    <lineage>
        <taxon>Bacteria</taxon>
        <taxon>Pseudomonadati</taxon>
        <taxon>Pseudomonadota</taxon>
        <taxon>Alphaproteobacteria</taxon>
        <taxon>Hyphomicrobiales</taxon>
        <taxon>Brucellaceae</taxon>
        <taxon>Brucella/Ochrobactrum group</taxon>
        <taxon>Brucella</taxon>
    </lineage>
</organism>
<proteinExistence type="inferred from homology"/>
<name>ACCD_BRUSI</name>
<sequence>MNWITNYVRPKINSMLGRREMPENLWIKDPSTGEMVFHKDLESNQFVIPSSGHHMRIKAKDRLRFFFDNGEYTTLEAPKVPLDPLKFRDEKKYIDRLKDYRSRTGMDDAIVNGLGTIEGLPIVATVQDFSFMGGSLGMGAGEAIIQGFEKAIELKRPLVLFASSGGARMQEGILSLMQLPRTTVAVEMLKEAGLPYIVVLTNPTTGGVTASYAMLGDIHIAEPGALIGFAGPRVIEQTIREKLPEGFQSSEYLMEHGMVDMVVSRLELKATIARLLKIMTKQPANSDAPAPQKPDADSKAA</sequence>
<reference key="1">
    <citation type="submission" date="2007-12" db="EMBL/GenBank/DDBJ databases">
        <title>Brucella suis ATCC 23445 whole genome shotgun sequencing project.</title>
        <authorList>
            <person name="Setubal J.C."/>
            <person name="Bowns C."/>
            <person name="Boyle S."/>
            <person name="Crasta O.R."/>
            <person name="Czar M.J."/>
            <person name="Dharmanolla C."/>
            <person name="Gillespie J.J."/>
            <person name="Kenyon R.W."/>
            <person name="Lu J."/>
            <person name="Mane S."/>
            <person name="Mohapatra S."/>
            <person name="Nagrani S."/>
            <person name="Purkayastha A."/>
            <person name="Rajasimha H.K."/>
            <person name="Shallom J.M."/>
            <person name="Shallom S."/>
            <person name="Shukla M."/>
            <person name="Snyder E.E."/>
            <person name="Sobral B.W."/>
            <person name="Wattam A.R."/>
            <person name="Will R."/>
            <person name="Williams K."/>
            <person name="Yoo H."/>
            <person name="Bruce D."/>
            <person name="Detter C."/>
            <person name="Munk C."/>
            <person name="Brettin T.S."/>
        </authorList>
    </citation>
    <scope>NUCLEOTIDE SEQUENCE [LARGE SCALE GENOMIC DNA]</scope>
    <source>
        <strain>ATCC 23445 / NCTC 10510</strain>
    </source>
</reference>
<gene>
    <name evidence="1" type="primary">accD</name>
    <name type="ordered locus">BSUIS_A1947</name>
</gene>
<comment type="function">
    <text evidence="1">Component of the acetyl coenzyme A carboxylase (ACC) complex. Biotin carboxylase (BC) catalyzes the carboxylation of biotin on its carrier protein (BCCP) and then the CO(2) group is transferred by the transcarboxylase to acetyl-CoA to form malonyl-CoA.</text>
</comment>
<comment type="catalytic activity">
    <reaction evidence="1">
        <text>N(6)-carboxybiotinyl-L-lysyl-[protein] + acetyl-CoA = N(6)-biotinyl-L-lysyl-[protein] + malonyl-CoA</text>
        <dbReference type="Rhea" id="RHEA:54728"/>
        <dbReference type="Rhea" id="RHEA-COMP:10505"/>
        <dbReference type="Rhea" id="RHEA-COMP:10506"/>
        <dbReference type="ChEBI" id="CHEBI:57288"/>
        <dbReference type="ChEBI" id="CHEBI:57384"/>
        <dbReference type="ChEBI" id="CHEBI:83144"/>
        <dbReference type="ChEBI" id="CHEBI:83145"/>
        <dbReference type="EC" id="2.1.3.15"/>
    </reaction>
</comment>
<comment type="pathway">
    <text evidence="1">Lipid metabolism; malonyl-CoA biosynthesis; malonyl-CoA from acetyl-CoA: step 1/1.</text>
</comment>
<comment type="subunit">
    <text evidence="1">Acetyl-CoA carboxylase is a heterohexamer composed of biotin carboxyl carrier protein (AccB), biotin carboxylase (AccC) and two subunits each of ACCase subunit alpha (AccA) and ACCase subunit beta (AccD).</text>
</comment>
<comment type="subcellular location">
    <subcellularLocation>
        <location evidence="1">Cytoplasm</location>
    </subcellularLocation>
</comment>
<comment type="similarity">
    <text evidence="1">Belongs to the AccD/PCCB family.</text>
</comment>
<accession>B0CJK5</accession>
<evidence type="ECO:0000255" key="1">
    <source>
        <dbReference type="HAMAP-Rule" id="MF_01395"/>
    </source>
</evidence>
<evidence type="ECO:0000255" key="2">
    <source>
        <dbReference type="PROSITE-ProRule" id="PRU01136"/>
    </source>
</evidence>
<dbReference type="EC" id="2.1.3.15" evidence="1"/>
<dbReference type="EMBL" id="CP000911">
    <property type="protein sequence ID" value="ABY38957.1"/>
    <property type="molecule type" value="Genomic_DNA"/>
</dbReference>
<dbReference type="RefSeq" id="WP_002965171.1">
    <property type="nucleotide sequence ID" value="NC_010169.1"/>
</dbReference>
<dbReference type="SMR" id="B0CJK5"/>
<dbReference type="GeneID" id="55591673"/>
<dbReference type="KEGG" id="bmt:BSUIS_A1947"/>
<dbReference type="HOGENOM" id="CLU_015486_1_0_5"/>
<dbReference type="UniPathway" id="UPA00655">
    <property type="reaction ID" value="UER00711"/>
</dbReference>
<dbReference type="Proteomes" id="UP000008545">
    <property type="component" value="Chromosome I"/>
</dbReference>
<dbReference type="GO" id="GO:0009329">
    <property type="term" value="C:acetate CoA-transferase complex"/>
    <property type="evidence" value="ECO:0007669"/>
    <property type="project" value="TreeGrafter"/>
</dbReference>
<dbReference type="GO" id="GO:0003989">
    <property type="term" value="F:acetyl-CoA carboxylase activity"/>
    <property type="evidence" value="ECO:0007669"/>
    <property type="project" value="InterPro"/>
</dbReference>
<dbReference type="GO" id="GO:0005524">
    <property type="term" value="F:ATP binding"/>
    <property type="evidence" value="ECO:0007669"/>
    <property type="project" value="UniProtKB-KW"/>
</dbReference>
<dbReference type="GO" id="GO:0016743">
    <property type="term" value="F:carboxyl- or carbamoyltransferase activity"/>
    <property type="evidence" value="ECO:0007669"/>
    <property type="project" value="UniProtKB-UniRule"/>
</dbReference>
<dbReference type="GO" id="GO:0006633">
    <property type="term" value="P:fatty acid biosynthetic process"/>
    <property type="evidence" value="ECO:0007669"/>
    <property type="project" value="UniProtKB-KW"/>
</dbReference>
<dbReference type="GO" id="GO:2001295">
    <property type="term" value="P:malonyl-CoA biosynthetic process"/>
    <property type="evidence" value="ECO:0007669"/>
    <property type="project" value="UniProtKB-UniRule"/>
</dbReference>
<dbReference type="Gene3D" id="3.90.226.10">
    <property type="entry name" value="2-enoyl-CoA Hydratase, Chain A, domain 1"/>
    <property type="match status" value="1"/>
</dbReference>
<dbReference type="HAMAP" id="MF_01395">
    <property type="entry name" value="AcetylCoA_CT_beta"/>
    <property type="match status" value="1"/>
</dbReference>
<dbReference type="InterPro" id="IPR034733">
    <property type="entry name" value="AcCoA_carboxyl_beta"/>
</dbReference>
<dbReference type="InterPro" id="IPR000438">
    <property type="entry name" value="Acetyl_CoA_COase_Trfase_b_su"/>
</dbReference>
<dbReference type="InterPro" id="IPR029045">
    <property type="entry name" value="ClpP/crotonase-like_dom_sf"/>
</dbReference>
<dbReference type="InterPro" id="IPR011762">
    <property type="entry name" value="COA_CT_N"/>
</dbReference>
<dbReference type="NCBIfam" id="TIGR00515">
    <property type="entry name" value="accD"/>
    <property type="match status" value="1"/>
</dbReference>
<dbReference type="PANTHER" id="PTHR42995">
    <property type="entry name" value="ACETYL-COENZYME A CARBOXYLASE CARBOXYL TRANSFERASE SUBUNIT BETA, CHLOROPLASTIC"/>
    <property type="match status" value="1"/>
</dbReference>
<dbReference type="PANTHER" id="PTHR42995:SF5">
    <property type="entry name" value="ACETYL-COENZYME A CARBOXYLASE CARBOXYL TRANSFERASE SUBUNIT BETA, CHLOROPLASTIC"/>
    <property type="match status" value="1"/>
</dbReference>
<dbReference type="Pfam" id="PF01039">
    <property type="entry name" value="Carboxyl_trans"/>
    <property type="match status" value="1"/>
</dbReference>
<dbReference type="PRINTS" id="PR01070">
    <property type="entry name" value="ACCCTRFRASEB"/>
</dbReference>
<dbReference type="SUPFAM" id="SSF52096">
    <property type="entry name" value="ClpP/crotonase"/>
    <property type="match status" value="1"/>
</dbReference>
<dbReference type="PROSITE" id="PS50980">
    <property type="entry name" value="COA_CT_NTER"/>
    <property type="match status" value="1"/>
</dbReference>